<feature type="chain" id="PRO_1000137826" description="DnaA regulatory inactivator Hda">
    <location>
        <begin position="1"/>
        <end position="239"/>
    </location>
</feature>
<keyword id="KW-0235">DNA replication</keyword>
<keyword id="KW-0236">DNA replication inhibitor</keyword>
<gene>
    <name evidence="2" type="primary">hda</name>
    <name type="ordered locus">YpAngola_A3125</name>
</gene>
<reference key="1">
    <citation type="journal article" date="2010" name="J. Bacteriol.">
        <title>Genome sequence of the deep-rooted Yersinia pestis strain Angola reveals new insights into the evolution and pangenome of the plague bacterium.</title>
        <authorList>
            <person name="Eppinger M."/>
            <person name="Worsham P.L."/>
            <person name="Nikolich M.P."/>
            <person name="Riley D.R."/>
            <person name="Sebastian Y."/>
            <person name="Mou S."/>
            <person name="Achtman M."/>
            <person name="Lindler L.E."/>
            <person name="Ravel J."/>
        </authorList>
    </citation>
    <scope>NUCLEOTIDE SEQUENCE [LARGE SCALE GENOMIC DNA]</scope>
    <source>
        <strain>Angola</strain>
    </source>
</reference>
<organism>
    <name type="scientific">Yersinia pestis bv. Antiqua (strain Angola)</name>
    <dbReference type="NCBI Taxonomy" id="349746"/>
    <lineage>
        <taxon>Bacteria</taxon>
        <taxon>Pseudomonadati</taxon>
        <taxon>Pseudomonadota</taxon>
        <taxon>Gammaproteobacteria</taxon>
        <taxon>Enterobacterales</taxon>
        <taxon>Yersiniaceae</taxon>
        <taxon>Yersinia</taxon>
    </lineage>
</organism>
<evidence type="ECO:0000250" key="1"/>
<evidence type="ECO:0000255" key="2">
    <source>
        <dbReference type="HAMAP-Rule" id="MF_01158"/>
    </source>
</evidence>
<proteinExistence type="inferred from homology"/>
<accession>A9QZX0</accession>
<comment type="function">
    <text evidence="1">Mediates the interaction of DNA replication initiator protein DnaA with DNA polymerase subunit beta sliding clamp (dnaN). Stimulates hydrolysis of ATP-DnaA to ADP-DnaA, rendering DnaA inactive for reinitiation, a process called regulatory inhibition of DnaA or RIDA (By similarity).</text>
</comment>
<comment type="subunit">
    <text evidence="2">The active form seems to be an ADP-bound monomer. Forms the RIDA complex (regulatory inactivation of DnaA) of ATP-DnaA, ADP-Hda and the DNA-loaded beta sliding clamp (dnaN).</text>
</comment>
<comment type="similarity">
    <text evidence="2">Belongs to the DnaA family. HdA subfamily.</text>
</comment>
<dbReference type="EMBL" id="CP000901">
    <property type="protein sequence ID" value="ABX87114.1"/>
    <property type="molecule type" value="Genomic_DNA"/>
</dbReference>
<dbReference type="SMR" id="A9QZX0"/>
<dbReference type="KEGG" id="ypg:YpAngola_A3125"/>
<dbReference type="GO" id="GO:0006270">
    <property type="term" value="P:DNA replication initiation"/>
    <property type="evidence" value="ECO:0007669"/>
    <property type="project" value="TreeGrafter"/>
</dbReference>
<dbReference type="GO" id="GO:0032297">
    <property type="term" value="P:negative regulation of DNA-templated DNA replication initiation"/>
    <property type="evidence" value="ECO:0007669"/>
    <property type="project" value="InterPro"/>
</dbReference>
<dbReference type="FunFam" id="1.10.8.60:FF:000024">
    <property type="entry name" value="DnaA regulatory inactivator Hda"/>
    <property type="match status" value="1"/>
</dbReference>
<dbReference type="FunFam" id="3.40.50.300:FF:000452">
    <property type="entry name" value="DnaA regulatory inactivator Hda"/>
    <property type="match status" value="1"/>
</dbReference>
<dbReference type="Gene3D" id="1.10.8.60">
    <property type="match status" value="1"/>
</dbReference>
<dbReference type="Gene3D" id="3.40.50.300">
    <property type="entry name" value="P-loop containing nucleotide triphosphate hydrolases"/>
    <property type="match status" value="1"/>
</dbReference>
<dbReference type="HAMAP" id="MF_01158">
    <property type="entry name" value="Hda"/>
    <property type="match status" value="1"/>
</dbReference>
<dbReference type="InterPro" id="IPR020591">
    <property type="entry name" value="Chromosome_initiator_DnaA-like"/>
</dbReference>
<dbReference type="InterPro" id="IPR013317">
    <property type="entry name" value="DnaA_dom"/>
</dbReference>
<dbReference type="InterPro" id="IPR017788">
    <property type="entry name" value="Hda"/>
</dbReference>
<dbReference type="InterPro" id="IPR022864">
    <property type="entry name" value="Hda_Enterobact"/>
</dbReference>
<dbReference type="InterPro" id="IPR055199">
    <property type="entry name" value="Hda_lid"/>
</dbReference>
<dbReference type="InterPro" id="IPR027417">
    <property type="entry name" value="P-loop_NTPase"/>
</dbReference>
<dbReference type="NCBIfam" id="TIGR03420">
    <property type="entry name" value="DnaA_homol_Hda"/>
    <property type="match status" value="1"/>
</dbReference>
<dbReference type="NCBIfam" id="NF005982">
    <property type="entry name" value="PRK08084.1"/>
    <property type="match status" value="1"/>
</dbReference>
<dbReference type="PANTHER" id="PTHR30050">
    <property type="entry name" value="CHROMOSOMAL REPLICATION INITIATOR PROTEIN DNAA"/>
    <property type="match status" value="1"/>
</dbReference>
<dbReference type="PANTHER" id="PTHR30050:SF5">
    <property type="entry name" value="DNAA REGULATORY INACTIVATOR HDA"/>
    <property type="match status" value="1"/>
</dbReference>
<dbReference type="Pfam" id="PF00308">
    <property type="entry name" value="Bac_DnaA"/>
    <property type="match status" value="1"/>
</dbReference>
<dbReference type="Pfam" id="PF22688">
    <property type="entry name" value="Hda_lid"/>
    <property type="match status" value="1"/>
</dbReference>
<dbReference type="PRINTS" id="PR00051">
    <property type="entry name" value="DNAA"/>
</dbReference>
<dbReference type="SUPFAM" id="SSF52540">
    <property type="entry name" value="P-loop containing nucleoside triphosphate hydrolases"/>
    <property type="match status" value="1"/>
</dbReference>
<sequence length="239" mass="27143">MLVEVLLNTPAQLSLPLYLPDDETFASFYPGENPSLLAAIQSAVHQPHGSYIYFWSREGGGRSHLLHAACAELSQQGEAVGYVPLDKRAYFIPEVLEGMEQLALVCIDNIECIAGDEQWEMAMFNLYNRIVETGRTRLLITGDRPPRQLNLGLPDLASRLDWGQIYKLQPLSDDEKLQALQLRAKLRGFELPEDVGRFLLKRLDREMRTLFMTLDQLDRASITAQRKLTIPFVKEILSL</sequence>
<protein>
    <recommendedName>
        <fullName evidence="2">DnaA regulatory inactivator Hda</fullName>
    </recommendedName>
</protein>
<name>HDA_YERPG</name>